<proteinExistence type="inferred from homology"/>
<sequence>MLILKTVKQLQEFVASAGDEIGFVPTMGALHDGHMSLIKKCVSENAVSIVSTFVNPTQFLPGEDLEKYPKKEESDIKICELCGVSAMFIPDAKEMYFDDEPCIIAPKKYSSILEGKSRPGHFDGVLRVLVKLFNLTRAKRVYMGKKDAQQLVIVQNMVKTLFLNLQVVPCEIVRESDGLALSSRNAYLSEEDKCNALRLSRALINASNLIKGGELDTSEIKTGMLKTLEPLTVDYVAIVDRDFNQISKVELGNTIILVAANVGKTRLIDNIWV</sequence>
<keyword id="KW-0067">ATP-binding</keyword>
<keyword id="KW-0963">Cytoplasm</keyword>
<keyword id="KW-0436">Ligase</keyword>
<keyword id="KW-0547">Nucleotide-binding</keyword>
<keyword id="KW-0566">Pantothenate biosynthesis</keyword>
<keyword id="KW-1185">Reference proteome</keyword>
<organism>
    <name type="scientific">Campylobacter curvus (strain 525.92)</name>
    <dbReference type="NCBI Taxonomy" id="360105"/>
    <lineage>
        <taxon>Bacteria</taxon>
        <taxon>Pseudomonadati</taxon>
        <taxon>Campylobacterota</taxon>
        <taxon>Epsilonproteobacteria</taxon>
        <taxon>Campylobacterales</taxon>
        <taxon>Campylobacteraceae</taxon>
        <taxon>Campylobacter</taxon>
    </lineage>
</organism>
<feature type="chain" id="PRO_1000076847" description="Pantothenate synthetase">
    <location>
        <begin position="1"/>
        <end position="273"/>
    </location>
</feature>
<feature type="active site" description="Proton donor" evidence="1">
    <location>
        <position position="34"/>
    </location>
</feature>
<feature type="binding site" evidence="1">
    <location>
        <begin position="27"/>
        <end position="34"/>
    </location>
    <ligand>
        <name>ATP</name>
        <dbReference type="ChEBI" id="CHEBI:30616"/>
    </ligand>
</feature>
<feature type="binding site" evidence="1">
    <location>
        <position position="58"/>
    </location>
    <ligand>
        <name>(R)-pantoate</name>
        <dbReference type="ChEBI" id="CHEBI:15980"/>
    </ligand>
</feature>
<feature type="binding site" evidence="1">
    <location>
        <position position="58"/>
    </location>
    <ligand>
        <name>beta-alanine</name>
        <dbReference type="ChEBI" id="CHEBI:57966"/>
    </ligand>
</feature>
<feature type="binding site" evidence="1">
    <location>
        <begin position="144"/>
        <end position="147"/>
    </location>
    <ligand>
        <name>ATP</name>
        <dbReference type="ChEBI" id="CHEBI:30616"/>
    </ligand>
</feature>
<feature type="binding site" evidence="1">
    <location>
        <position position="150"/>
    </location>
    <ligand>
        <name>(R)-pantoate</name>
        <dbReference type="ChEBI" id="CHEBI:15980"/>
    </ligand>
</feature>
<feature type="binding site" evidence="1">
    <location>
        <position position="173"/>
    </location>
    <ligand>
        <name>ATP</name>
        <dbReference type="ChEBI" id="CHEBI:30616"/>
    </ligand>
</feature>
<feature type="binding site" evidence="1">
    <location>
        <begin position="181"/>
        <end position="184"/>
    </location>
    <ligand>
        <name>ATP</name>
        <dbReference type="ChEBI" id="CHEBI:30616"/>
    </ligand>
</feature>
<accession>A7GZE9</accession>
<name>PANC_CAMC5</name>
<gene>
    <name evidence="1" type="primary">panC</name>
    <name type="ordered locus">Ccur92_12870</name>
    <name type="ORF">CCV52592_0252</name>
</gene>
<protein>
    <recommendedName>
        <fullName evidence="1">Pantothenate synthetase</fullName>
        <shortName evidence="1">PS</shortName>
        <ecNumber evidence="1">6.3.2.1</ecNumber>
    </recommendedName>
    <alternativeName>
        <fullName evidence="1">Pantoate--beta-alanine ligase</fullName>
    </alternativeName>
    <alternativeName>
        <fullName evidence="1">Pantoate-activating enzyme</fullName>
    </alternativeName>
</protein>
<comment type="function">
    <text evidence="1">Catalyzes the condensation of pantoate with beta-alanine in an ATP-dependent reaction via a pantoyl-adenylate intermediate.</text>
</comment>
<comment type="catalytic activity">
    <reaction evidence="1">
        <text>(R)-pantoate + beta-alanine + ATP = (R)-pantothenate + AMP + diphosphate + H(+)</text>
        <dbReference type="Rhea" id="RHEA:10912"/>
        <dbReference type="ChEBI" id="CHEBI:15378"/>
        <dbReference type="ChEBI" id="CHEBI:15980"/>
        <dbReference type="ChEBI" id="CHEBI:29032"/>
        <dbReference type="ChEBI" id="CHEBI:30616"/>
        <dbReference type="ChEBI" id="CHEBI:33019"/>
        <dbReference type="ChEBI" id="CHEBI:57966"/>
        <dbReference type="ChEBI" id="CHEBI:456215"/>
        <dbReference type="EC" id="6.3.2.1"/>
    </reaction>
</comment>
<comment type="pathway">
    <text evidence="1">Cofactor biosynthesis; (R)-pantothenate biosynthesis; (R)-pantothenate from (R)-pantoate and beta-alanine: step 1/1.</text>
</comment>
<comment type="subunit">
    <text evidence="1">Homodimer.</text>
</comment>
<comment type="subcellular location">
    <subcellularLocation>
        <location evidence="1">Cytoplasm</location>
    </subcellularLocation>
</comment>
<comment type="miscellaneous">
    <text evidence="1">The reaction proceeds by a bi uni uni bi ping pong mechanism.</text>
</comment>
<comment type="similarity">
    <text evidence="1">Belongs to the pantothenate synthetase family.</text>
</comment>
<reference key="1">
    <citation type="submission" date="2007-07" db="EMBL/GenBank/DDBJ databases">
        <title>Genome sequence of Campylobacter curvus 525.92 isolated from human feces.</title>
        <authorList>
            <person name="Fouts D.E."/>
            <person name="Mongodin E.F."/>
            <person name="Puiu D."/>
            <person name="Sebastian Y."/>
            <person name="Miller W.G."/>
            <person name="Mandrell R.E."/>
            <person name="Lastovica A.J."/>
            <person name="Nelson K.E."/>
        </authorList>
    </citation>
    <scope>NUCLEOTIDE SEQUENCE [LARGE SCALE GENOMIC DNA]</scope>
    <source>
        <strain>525.92</strain>
    </source>
</reference>
<evidence type="ECO:0000255" key="1">
    <source>
        <dbReference type="HAMAP-Rule" id="MF_00158"/>
    </source>
</evidence>
<dbReference type="EC" id="6.3.2.1" evidence="1"/>
<dbReference type="EMBL" id="CP000767">
    <property type="protein sequence ID" value="EAU01287.1"/>
    <property type="molecule type" value="Genomic_DNA"/>
</dbReference>
<dbReference type="RefSeq" id="WP_009651303.1">
    <property type="nucleotide sequence ID" value="NC_009715.2"/>
</dbReference>
<dbReference type="SMR" id="A7GZE9"/>
<dbReference type="STRING" id="360105.CCV52592_0252"/>
<dbReference type="KEGG" id="ccv:CCV52592_0252"/>
<dbReference type="HOGENOM" id="CLU_047148_0_0_7"/>
<dbReference type="OrthoDB" id="9773087at2"/>
<dbReference type="UniPathway" id="UPA00028">
    <property type="reaction ID" value="UER00005"/>
</dbReference>
<dbReference type="Proteomes" id="UP000006380">
    <property type="component" value="Chromosome"/>
</dbReference>
<dbReference type="GO" id="GO:0005829">
    <property type="term" value="C:cytosol"/>
    <property type="evidence" value="ECO:0007669"/>
    <property type="project" value="TreeGrafter"/>
</dbReference>
<dbReference type="GO" id="GO:0005524">
    <property type="term" value="F:ATP binding"/>
    <property type="evidence" value="ECO:0007669"/>
    <property type="project" value="UniProtKB-KW"/>
</dbReference>
<dbReference type="GO" id="GO:0004592">
    <property type="term" value="F:pantoate-beta-alanine ligase activity"/>
    <property type="evidence" value="ECO:0007669"/>
    <property type="project" value="UniProtKB-UniRule"/>
</dbReference>
<dbReference type="GO" id="GO:0015940">
    <property type="term" value="P:pantothenate biosynthetic process"/>
    <property type="evidence" value="ECO:0007669"/>
    <property type="project" value="UniProtKB-UniRule"/>
</dbReference>
<dbReference type="CDD" id="cd00560">
    <property type="entry name" value="PanC"/>
    <property type="match status" value="1"/>
</dbReference>
<dbReference type="Gene3D" id="3.40.50.620">
    <property type="entry name" value="HUPs"/>
    <property type="match status" value="1"/>
</dbReference>
<dbReference type="Gene3D" id="3.30.1300.10">
    <property type="entry name" value="Pantoate-beta-alanine ligase, C-terminal domain"/>
    <property type="match status" value="1"/>
</dbReference>
<dbReference type="HAMAP" id="MF_00158">
    <property type="entry name" value="PanC"/>
    <property type="match status" value="1"/>
</dbReference>
<dbReference type="InterPro" id="IPR003721">
    <property type="entry name" value="Pantoate_ligase"/>
</dbReference>
<dbReference type="InterPro" id="IPR042176">
    <property type="entry name" value="Pantoate_ligase_C"/>
</dbReference>
<dbReference type="InterPro" id="IPR014729">
    <property type="entry name" value="Rossmann-like_a/b/a_fold"/>
</dbReference>
<dbReference type="NCBIfam" id="TIGR00018">
    <property type="entry name" value="panC"/>
    <property type="match status" value="1"/>
</dbReference>
<dbReference type="PANTHER" id="PTHR21299">
    <property type="entry name" value="CYTIDYLATE KINASE/PANTOATE-BETA-ALANINE LIGASE"/>
    <property type="match status" value="1"/>
</dbReference>
<dbReference type="PANTHER" id="PTHR21299:SF1">
    <property type="entry name" value="PANTOATE--BETA-ALANINE LIGASE"/>
    <property type="match status" value="1"/>
</dbReference>
<dbReference type="Pfam" id="PF02569">
    <property type="entry name" value="Pantoate_ligase"/>
    <property type="match status" value="1"/>
</dbReference>
<dbReference type="SUPFAM" id="SSF52374">
    <property type="entry name" value="Nucleotidylyl transferase"/>
    <property type="match status" value="1"/>
</dbReference>